<organism>
    <name type="scientific">Streptococcus pneumoniae serotype 19F (strain G54)</name>
    <dbReference type="NCBI Taxonomy" id="512566"/>
    <lineage>
        <taxon>Bacteria</taxon>
        <taxon>Bacillati</taxon>
        <taxon>Bacillota</taxon>
        <taxon>Bacilli</taxon>
        <taxon>Lactobacillales</taxon>
        <taxon>Streptococcaceae</taxon>
        <taxon>Streptococcus</taxon>
    </lineage>
</organism>
<protein>
    <recommendedName>
        <fullName evidence="1">Elongation factor P</fullName>
        <shortName evidence="1">EF-P</shortName>
    </recommendedName>
</protein>
<sequence>MIEASKLKAGMTFETADGKLIRVLEASHHKPGKGNTIMRMKLRDVRTGSTFDTSYRPEEKFEQAIIETVPAQYLYKMDDTAYFMNTETYDQYEIPVVNVENELLYILENSDVKIQFYGTEVIGVTVPTTVELTVAETQPSIKGATVTGSGKPATMETGLVVNVPDFIEAGQKLVINTAEGTYVSRA</sequence>
<keyword id="KW-0963">Cytoplasm</keyword>
<keyword id="KW-0251">Elongation factor</keyword>
<keyword id="KW-0648">Protein biosynthesis</keyword>
<name>EFP_STRP4</name>
<proteinExistence type="inferred from homology"/>
<dbReference type="EMBL" id="CP001015">
    <property type="protein sequence ID" value="ACF56214.1"/>
    <property type="molecule type" value="Genomic_DNA"/>
</dbReference>
<dbReference type="SMR" id="B5E1P5"/>
<dbReference type="KEGG" id="spx:SPG_0398"/>
<dbReference type="HOGENOM" id="CLU_074944_3_0_9"/>
<dbReference type="UniPathway" id="UPA00345"/>
<dbReference type="GO" id="GO:0005737">
    <property type="term" value="C:cytoplasm"/>
    <property type="evidence" value="ECO:0007669"/>
    <property type="project" value="UniProtKB-SubCell"/>
</dbReference>
<dbReference type="GO" id="GO:0003746">
    <property type="term" value="F:translation elongation factor activity"/>
    <property type="evidence" value="ECO:0007669"/>
    <property type="project" value="UniProtKB-UniRule"/>
</dbReference>
<dbReference type="GO" id="GO:0043043">
    <property type="term" value="P:peptide biosynthetic process"/>
    <property type="evidence" value="ECO:0007669"/>
    <property type="project" value="InterPro"/>
</dbReference>
<dbReference type="CDD" id="cd04470">
    <property type="entry name" value="S1_EF-P_repeat_1"/>
    <property type="match status" value="1"/>
</dbReference>
<dbReference type="CDD" id="cd05794">
    <property type="entry name" value="S1_EF-P_repeat_2"/>
    <property type="match status" value="1"/>
</dbReference>
<dbReference type="FunFam" id="2.30.30.30:FF:000003">
    <property type="entry name" value="Elongation factor P"/>
    <property type="match status" value="1"/>
</dbReference>
<dbReference type="FunFam" id="2.40.50.140:FF:000004">
    <property type="entry name" value="Elongation factor P"/>
    <property type="match status" value="1"/>
</dbReference>
<dbReference type="FunFam" id="2.40.50.140:FF:000009">
    <property type="entry name" value="Elongation factor P"/>
    <property type="match status" value="1"/>
</dbReference>
<dbReference type="Gene3D" id="2.30.30.30">
    <property type="match status" value="1"/>
</dbReference>
<dbReference type="Gene3D" id="2.40.50.140">
    <property type="entry name" value="Nucleic acid-binding proteins"/>
    <property type="match status" value="2"/>
</dbReference>
<dbReference type="HAMAP" id="MF_00141">
    <property type="entry name" value="EF_P"/>
    <property type="match status" value="1"/>
</dbReference>
<dbReference type="InterPro" id="IPR015365">
    <property type="entry name" value="Elong-fact-P_C"/>
</dbReference>
<dbReference type="InterPro" id="IPR012340">
    <property type="entry name" value="NA-bd_OB-fold"/>
</dbReference>
<dbReference type="InterPro" id="IPR014722">
    <property type="entry name" value="Rib_uL2_dom2"/>
</dbReference>
<dbReference type="InterPro" id="IPR020599">
    <property type="entry name" value="Transl_elong_fac_P/YeiP"/>
</dbReference>
<dbReference type="InterPro" id="IPR013185">
    <property type="entry name" value="Transl_elong_KOW-like"/>
</dbReference>
<dbReference type="InterPro" id="IPR001059">
    <property type="entry name" value="Transl_elong_P/YeiP_cen"/>
</dbReference>
<dbReference type="InterPro" id="IPR013852">
    <property type="entry name" value="Transl_elong_P/YeiP_CS"/>
</dbReference>
<dbReference type="InterPro" id="IPR011768">
    <property type="entry name" value="Transl_elongation_fac_P"/>
</dbReference>
<dbReference type="InterPro" id="IPR008991">
    <property type="entry name" value="Translation_prot_SH3-like_sf"/>
</dbReference>
<dbReference type="NCBIfam" id="TIGR00038">
    <property type="entry name" value="efp"/>
    <property type="match status" value="1"/>
</dbReference>
<dbReference type="NCBIfam" id="NF001810">
    <property type="entry name" value="PRK00529.1"/>
    <property type="match status" value="1"/>
</dbReference>
<dbReference type="PANTHER" id="PTHR30053">
    <property type="entry name" value="ELONGATION FACTOR P"/>
    <property type="match status" value="1"/>
</dbReference>
<dbReference type="PANTHER" id="PTHR30053:SF12">
    <property type="entry name" value="ELONGATION FACTOR P (EF-P) FAMILY PROTEIN"/>
    <property type="match status" value="1"/>
</dbReference>
<dbReference type="Pfam" id="PF01132">
    <property type="entry name" value="EFP"/>
    <property type="match status" value="1"/>
</dbReference>
<dbReference type="Pfam" id="PF08207">
    <property type="entry name" value="EFP_N"/>
    <property type="match status" value="1"/>
</dbReference>
<dbReference type="Pfam" id="PF09285">
    <property type="entry name" value="Elong-fact-P_C"/>
    <property type="match status" value="1"/>
</dbReference>
<dbReference type="PIRSF" id="PIRSF005901">
    <property type="entry name" value="EF-P"/>
    <property type="match status" value="1"/>
</dbReference>
<dbReference type="SMART" id="SM01185">
    <property type="entry name" value="EFP"/>
    <property type="match status" value="1"/>
</dbReference>
<dbReference type="SMART" id="SM00841">
    <property type="entry name" value="Elong-fact-P_C"/>
    <property type="match status" value="1"/>
</dbReference>
<dbReference type="SUPFAM" id="SSF50249">
    <property type="entry name" value="Nucleic acid-binding proteins"/>
    <property type="match status" value="2"/>
</dbReference>
<dbReference type="SUPFAM" id="SSF50104">
    <property type="entry name" value="Translation proteins SH3-like domain"/>
    <property type="match status" value="1"/>
</dbReference>
<dbReference type="PROSITE" id="PS01275">
    <property type="entry name" value="EFP"/>
    <property type="match status" value="1"/>
</dbReference>
<evidence type="ECO:0000255" key="1">
    <source>
        <dbReference type="HAMAP-Rule" id="MF_00141"/>
    </source>
</evidence>
<gene>
    <name evidence="1" type="primary">efp</name>
    <name type="ordered locus">SPG_0398</name>
</gene>
<accession>B5E1P5</accession>
<feature type="chain" id="PRO_1000096211" description="Elongation factor P">
    <location>
        <begin position="1"/>
        <end position="186"/>
    </location>
</feature>
<comment type="function">
    <text evidence="1">Involved in peptide bond synthesis. Stimulates efficient translation and peptide-bond synthesis on native or reconstituted 70S ribosomes in vitro. Probably functions indirectly by altering the affinity of the ribosome for aminoacyl-tRNA, thus increasing their reactivity as acceptors for peptidyl transferase.</text>
</comment>
<comment type="pathway">
    <text evidence="1">Protein biosynthesis; polypeptide chain elongation.</text>
</comment>
<comment type="subcellular location">
    <subcellularLocation>
        <location evidence="1">Cytoplasm</location>
    </subcellularLocation>
</comment>
<comment type="similarity">
    <text evidence="1">Belongs to the elongation factor P family.</text>
</comment>
<reference key="1">
    <citation type="journal article" date="2001" name="Microb. Drug Resist.">
        <title>Annotated draft genomic sequence from a Streptococcus pneumoniae type 19F clinical isolate.</title>
        <authorList>
            <person name="Dopazo J."/>
            <person name="Mendoza A."/>
            <person name="Herrero J."/>
            <person name="Caldara F."/>
            <person name="Humbert Y."/>
            <person name="Friedli L."/>
            <person name="Guerrier M."/>
            <person name="Grand-Schenk E."/>
            <person name="Gandin C."/>
            <person name="de Francesco M."/>
            <person name="Polissi A."/>
            <person name="Buell G."/>
            <person name="Feger G."/>
            <person name="Garcia E."/>
            <person name="Peitsch M."/>
            <person name="Garcia-Bustos J.F."/>
        </authorList>
    </citation>
    <scope>NUCLEOTIDE SEQUENCE [LARGE SCALE GENOMIC DNA]</scope>
    <source>
        <strain>G54</strain>
    </source>
</reference>
<reference key="2">
    <citation type="submission" date="2008-03" db="EMBL/GenBank/DDBJ databases">
        <title>Pneumococcal beta glucoside metabolism investigated by whole genome comparison.</title>
        <authorList>
            <person name="Mulas L."/>
            <person name="Trappetti C."/>
            <person name="Hakenbeck R."/>
            <person name="Iannelli F."/>
            <person name="Pozzi G."/>
            <person name="Davidsen T.M."/>
            <person name="Tettelin H."/>
            <person name="Oggioni M."/>
        </authorList>
    </citation>
    <scope>NUCLEOTIDE SEQUENCE [LARGE SCALE GENOMIC DNA]</scope>
    <source>
        <strain>G54</strain>
    </source>
</reference>